<proteinExistence type="evidence at protein level"/>
<name>ISPF_BACSU</name>
<feature type="chain" id="PRO_0000189441" description="2-C-methyl-D-erythritol 2,4-cyclodiphosphate synthase">
    <location>
        <begin position="1"/>
        <end position="158"/>
    </location>
</feature>
<feature type="binding site" evidence="1">
    <location>
        <begin position="9"/>
        <end position="11"/>
    </location>
    <ligand>
        <name>4-CDP-2-C-methyl-D-erythritol 2-phosphate</name>
        <dbReference type="ChEBI" id="CHEBI:57919"/>
    </ligand>
</feature>
<feature type="binding site" evidence="1">
    <location>
        <position position="9"/>
    </location>
    <ligand>
        <name>a divalent metal cation</name>
        <dbReference type="ChEBI" id="CHEBI:60240"/>
    </ligand>
</feature>
<feature type="binding site" evidence="1">
    <location>
        <position position="11"/>
    </location>
    <ligand>
        <name>a divalent metal cation</name>
        <dbReference type="ChEBI" id="CHEBI:60240"/>
    </ligand>
</feature>
<feature type="binding site" evidence="1">
    <location>
        <begin position="35"/>
        <end position="36"/>
    </location>
    <ligand>
        <name>4-CDP-2-C-methyl-D-erythritol 2-phosphate</name>
        <dbReference type="ChEBI" id="CHEBI:57919"/>
    </ligand>
</feature>
<feature type="binding site" evidence="1">
    <location>
        <position position="43"/>
    </location>
    <ligand>
        <name>a divalent metal cation</name>
        <dbReference type="ChEBI" id="CHEBI:60240"/>
    </ligand>
</feature>
<feature type="binding site" evidence="1">
    <location>
        <begin position="57"/>
        <end position="59"/>
    </location>
    <ligand>
        <name>4-CDP-2-C-methyl-D-erythritol 2-phosphate</name>
        <dbReference type="ChEBI" id="CHEBI:57919"/>
    </ligand>
</feature>
<feature type="binding site" evidence="1">
    <location>
        <begin position="62"/>
        <end position="66"/>
    </location>
    <ligand>
        <name>4-CDP-2-C-methyl-D-erythritol 2-phosphate</name>
        <dbReference type="ChEBI" id="CHEBI:57919"/>
    </ligand>
</feature>
<feature type="binding site" evidence="1">
    <location>
        <begin position="101"/>
        <end position="107"/>
    </location>
    <ligand>
        <name>4-CDP-2-C-methyl-D-erythritol 2-phosphate</name>
        <dbReference type="ChEBI" id="CHEBI:57919"/>
    </ligand>
</feature>
<feature type="binding site" evidence="1">
    <location>
        <begin position="133"/>
        <end position="136"/>
    </location>
    <ligand>
        <name>4-CDP-2-C-methyl-D-erythritol 2-phosphate</name>
        <dbReference type="ChEBI" id="CHEBI:57919"/>
    </ligand>
</feature>
<feature type="binding site" evidence="1">
    <location>
        <position position="140"/>
    </location>
    <ligand>
        <name>4-CDP-2-C-methyl-D-erythritol 2-phosphate</name>
        <dbReference type="ChEBI" id="CHEBI:57919"/>
    </ligand>
</feature>
<feature type="binding site" evidence="1">
    <location>
        <position position="143"/>
    </location>
    <ligand>
        <name>4-CDP-2-C-methyl-D-erythritol 2-phosphate</name>
        <dbReference type="ChEBI" id="CHEBI:57919"/>
    </ligand>
</feature>
<feature type="site" description="Transition state stabilizer" evidence="1">
    <location>
        <position position="35"/>
    </location>
</feature>
<feature type="site" description="Transition state stabilizer" evidence="1">
    <location>
        <position position="134"/>
    </location>
</feature>
<feature type="strand" evidence="5">
    <location>
        <begin position="2"/>
        <end position="17"/>
    </location>
</feature>
<feature type="strand" evidence="5">
    <location>
        <begin position="19"/>
        <end position="21"/>
    </location>
</feature>
<feature type="strand" evidence="5">
    <location>
        <begin position="24"/>
        <end position="26"/>
    </location>
</feature>
<feature type="strand" evidence="5">
    <location>
        <begin position="29"/>
        <end position="32"/>
    </location>
</feature>
<feature type="strand" evidence="5">
    <location>
        <begin position="34"/>
        <end position="36"/>
    </location>
</feature>
<feature type="helix" evidence="5">
    <location>
        <begin position="40"/>
        <end position="52"/>
    </location>
</feature>
<feature type="helix" evidence="5">
    <location>
        <begin position="58"/>
        <end position="61"/>
    </location>
</feature>
<feature type="turn" evidence="5">
    <location>
        <begin position="67"/>
        <end position="71"/>
    </location>
</feature>
<feature type="helix" evidence="5">
    <location>
        <begin position="74"/>
        <end position="87"/>
    </location>
</feature>
<feature type="strand" evidence="5">
    <location>
        <begin position="90"/>
        <end position="100"/>
    </location>
</feature>
<feature type="strand" evidence="5">
    <location>
        <begin position="102"/>
        <end position="104"/>
    </location>
</feature>
<feature type="turn" evidence="5">
    <location>
        <begin position="107"/>
        <end position="109"/>
    </location>
</feature>
<feature type="helix" evidence="5">
    <location>
        <begin position="110"/>
        <end position="120"/>
    </location>
</feature>
<feature type="helix" evidence="5">
    <location>
        <begin position="125"/>
        <end position="127"/>
    </location>
</feature>
<feature type="strand" evidence="5">
    <location>
        <begin position="128"/>
        <end position="133"/>
    </location>
</feature>
<feature type="helix" evidence="5">
    <location>
        <begin position="139"/>
        <end position="142"/>
    </location>
</feature>
<feature type="strand" evidence="5">
    <location>
        <begin position="145"/>
        <end position="157"/>
    </location>
</feature>
<gene>
    <name evidence="1" type="primary">ispF</name>
    <name type="synonym">yacN</name>
    <name type="ordered locus">BSU00910</name>
</gene>
<dbReference type="EC" id="4.6.1.12" evidence="1"/>
<dbReference type="EMBL" id="L14580">
    <property type="protein sequence ID" value="AAA21795.1"/>
    <property type="molecule type" value="Genomic_DNA"/>
</dbReference>
<dbReference type="EMBL" id="D26185">
    <property type="protein sequence ID" value="BAA05325.1"/>
    <property type="molecule type" value="Genomic_DNA"/>
</dbReference>
<dbReference type="EMBL" id="AL009126">
    <property type="protein sequence ID" value="CAB11867.1"/>
    <property type="molecule type" value="Genomic_DNA"/>
</dbReference>
<dbReference type="PIR" id="F69741">
    <property type="entry name" value="F69741"/>
</dbReference>
<dbReference type="RefSeq" id="NP_387972.1">
    <property type="nucleotide sequence ID" value="NC_000964.3"/>
</dbReference>
<dbReference type="RefSeq" id="WP_003225745.1">
    <property type="nucleotide sequence ID" value="NZ_OZ025638.1"/>
</dbReference>
<dbReference type="PDB" id="5IWX">
    <property type="method" value="X-ray"/>
    <property type="resolution" value="1.99 A"/>
    <property type="chains" value="A/B/C/D/E/F=1-158"/>
</dbReference>
<dbReference type="PDB" id="5IWY">
    <property type="method" value="X-ray"/>
    <property type="resolution" value="1.99 A"/>
    <property type="chains" value="A/B/C/D/E/F=1-158"/>
</dbReference>
<dbReference type="PDBsum" id="5IWX"/>
<dbReference type="PDBsum" id="5IWY"/>
<dbReference type="SMR" id="Q06756"/>
<dbReference type="FunCoup" id="Q06756">
    <property type="interactions" value="486"/>
</dbReference>
<dbReference type="STRING" id="224308.BSU00910"/>
<dbReference type="PaxDb" id="224308-BSU00910"/>
<dbReference type="EnsemblBacteria" id="CAB11867">
    <property type="protein sequence ID" value="CAB11867"/>
    <property type="gene ID" value="BSU_00910"/>
</dbReference>
<dbReference type="GeneID" id="936634"/>
<dbReference type="KEGG" id="bsu:BSU00910"/>
<dbReference type="PATRIC" id="fig|224308.179.peg.92"/>
<dbReference type="eggNOG" id="COG0245">
    <property type="taxonomic scope" value="Bacteria"/>
</dbReference>
<dbReference type="InParanoid" id="Q06756"/>
<dbReference type="OrthoDB" id="9804336at2"/>
<dbReference type="PhylomeDB" id="Q06756"/>
<dbReference type="BioCyc" id="BSUB:BSU00910-MONOMER"/>
<dbReference type="BRENDA" id="4.6.1.12">
    <property type="organism ID" value="658"/>
</dbReference>
<dbReference type="UniPathway" id="UPA00056">
    <property type="reaction ID" value="UER00095"/>
</dbReference>
<dbReference type="Proteomes" id="UP000001570">
    <property type="component" value="Chromosome"/>
</dbReference>
<dbReference type="GO" id="GO:0008685">
    <property type="term" value="F:2-C-methyl-D-erythritol 2,4-cyclodiphosphate synthase activity"/>
    <property type="evidence" value="ECO:0000318"/>
    <property type="project" value="GO_Central"/>
</dbReference>
<dbReference type="GO" id="GO:0046872">
    <property type="term" value="F:metal ion binding"/>
    <property type="evidence" value="ECO:0007669"/>
    <property type="project" value="UniProtKB-KW"/>
</dbReference>
<dbReference type="GO" id="GO:0019288">
    <property type="term" value="P:isopentenyl diphosphate biosynthetic process, methylerythritol 4-phosphate pathway"/>
    <property type="evidence" value="ECO:0007669"/>
    <property type="project" value="UniProtKB-UniRule"/>
</dbReference>
<dbReference type="GO" id="GO:0016114">
    <property type="term" value="P:terpenoid biosynthetic process"/>
    <property type="evidence" value="ECO:0007669"/>
    <property type="project" value="InterPro"/>
</dbReference>
<dbReference type="CDD" id="cd00554">
    <property type="entry name" value="MECDP_synthase"/>
    <property type="match status" value="1"/>
</dbReference>
<dbReference type="FunFam" id="3.30.1330.50:FF:000001">
    <property type="entry name" value="2-C-methyl-D-erythritol 2,4-cyclodiphosphate synthase"/>
    <property type="match status" value="1"/>
</dbReference>
<dbReference type="Gene3D" id="3.30.1330.50">
    <property type="entry name" value="2-C-methyl-D-erythritol 2,4-cyclodiphosphate synthase"/>
    <property type="match status" value="1"/>
</dbReference>
<dbReference type="HAMAP" id="MF_00107">
    <property type="entry name" value="IspF"/>
    <property type="match status" value="1"/>
</dbReference>
<dbReference type="InterPro" id="IPR003526">
    <property type="entry name" value="MECDP_synthase"/>
</dbReference>
<dbReference type="InterPro" id="IPR020555">
    <property type="entry name" value="MECDP_synthase_CS"/>
</dbReference>
<dbReference type="InterPro" id="IPR036571">
    <property type="entry name" value="MECDP_synthase_sf"/>
</dbReference>
<dbReference type="NCBIfam" id="TIGR00151">
    <property type="entry name" value="ispF"/>
    <property type="match status" value="1"/>
</dbReference>
<dbReference type="PANTHER" id="PTHR43181">
    <property type="entry name" value="2-C-METHYL-D-ERYTHRITOL 2,4-CYCLODIPHOSPHATE SYNTHASE, CHLOROPLASTIC"/>
    <property type="match status" value="1"/>
</dbReference>
<dbReference type="PANTHER" id="PTHR43181:SF1">
    <property type="entry name" value="2-C-METHYL-D-ERYTHRITOL 2,4-CYCLODIPHOSPHATE SYNTHASE, CHLOROPLASTIC"/>
    <property type="match status" value="1"/>
</dbReference>
<dbReference type="Pfam" id="PF02542">
    <property type="entry name" value="YgbB"/>
    <property type="match status" value="1"/>
</dbReference>
<dbReference type="SUPFAM" id="SSF69765">
    <property type="entry name" value="IpsF-like"/>
    <property type="match status" value="1"/>
</dbReference>
<dbReference type="PROSITE" id="PS01350">
    <property type="entry name" value="ISPF"/>
    <property type="match status" value="1"/>
</dbReference>
<protein>
    <recommendedName>
        <fullName evidence="1">2-C-methyl-D-erythritol 2,4-cyclodiphosphate synthase</fullName>
        <shortName evidence="1">MECDP-synthase</shortName>
        <shortName evidence="1">MECPP-synthase</shortName>
        <shortName evidence="1">MECPS</shortName>
        <ecNumber evidence="1">4.6.1.12</ecNumber>
    </recommendedName>
</protein>
<evidence type="ECO:0000255" key="1">
    <source>
        <dbReference type="HAMAP-Rule" id="MF_00107"/>
    </source>
</evidence>
<evidence type="ECO:0000269" key="2">
    <source>
    </source>
</evidence>
<evidence type="ECO:0000269" key="3">
    <source>
    </source>
</evidence>
<evidence type="ECO:0000305" key="4"/>
<evidence type="ECO:0007829" key="5">
    <source>
        <dbReference type="PDB" id="5IWX"/>
    </source>
</evidence>
<organism>
    <name type="scientific">Bacillus subtilis (strain 168)</name>
    <dbReference type="NCBI Taxonomy" id="224308"/>
    <lineage>
        <taxon>Bacteria</taxon>
        <taxon>Bacillati</taxon>
        <taxon>Bacillota</taxon>
        <taxon>Bacilli</taxon>
        <taxon>Bacillales</taxon>
        <taxon>Bacillaceae</taxon>
        <taxon>Bacillus</taxon>
    </lineage>
</organism>
<sequence length="158" mass="17126">MFRIGQGFDVHQLVEGRPLIIGGIEIPYEKGLLGHSDADVLLHTVADACLGAVGEGDIGKHFPDTDPEFKDADSFKLLQHVWGIVKQKGYVLGNIDCTIIAQKPKMLPYIEDMRKRIAEGLEADVSQVNVKATTTEKLGFTGRAEGIAAQATVLIQKG</sequence>
<reference key="1">
    <citation type="journal article" date="1994" name="J. Biol. Chem.">
        <title>Clustering and co-transcription of the Bacillus subtilis genes encoding the aminoacyl-tRNA synthetases specific for glutamate and for cysteine and the first enzyme for cysteine biosynthesis.</title>
        <authorList>
            <person name="Gagnon Y."/>
            <person name="Breton R."/>
            <person name="Putzer H."/>
            <person name="Pelchat M."/>
            <person name="Grunberg-Manago M."/>
            <person name="Lapointe J."/>
        </authorList>
    </citation>
    <scope>NUCLEOTIDE SEQUENCE [GENOMIC DNA]</scope>
</reference>
<reference key="2">
    <citation type="journal article" date="1994" name="DNA Res.">
        <title>Systematic sequencing of the 180 kilobase region of the Bacillus subtilis chromosome containing the replication origin.</title>
        <authorList>
            <person name="Ogasawara N."/>
            <person name="Nakai S."/>
            <person name="Yoshikawa H."/>
        </authorList>
    </citation>
    <scope>NUCLEOTIDE SEQUENCE [GENOMIC DNA]</scope>
    <source>
        <strain>168</strain>
    </source>
</reference>
<reference key="3">
    <citation type="journal article" date="1997" name="Nature">
        <title>The complete genome sequence of the Gram-positive bacterium Bacillus subtilis.</title>
        <authorList>
            <person name="Kunst F."/>
            <person name="Ogasawara N."/>
            <person name="Moszer I."/>
            <person name="Albertini A.M."/>
            <person name="Alloni G."/>
            <person name="Azevedo V."/>
            <person name="Bertero M.G."/>
            <person name="Bessieres P."/>
            <person name="Bolotin A."/>
            <person name="Borchert S."/>
            <person name="Borriss R."/>
            <person name="Boursier L."/>
            <person name="Brans A."/>
            <person name="Braun M."/>
            <person name="Brignell S.C."/>
            <person name="Bron S."/>
            <person name="Brouillet S."/>
            <person name="Bruschi C.V."/>
            <person name="Caldwell B."/>
            <person name="Capuano V."/>
            <person name="Carter N.M."/>
            <person name="Choi S.-K."/>
            <person name="Codani J.-J."/>
            <person name="Connerton I.F."/>
            <person name="Cummings N.J."/>
            <person name="Daniel R.A."/>
            <person name="Denizot F."/>
            <person name="Devine K.M."/>
            <person name="Duesterhoeft A."/>
            <person name="Ehrlich S.D."/>
            <person name="Emmerson P.T."/>
            <person name="Entian K.-D."/>
            <person name="Errington J."/>
            <person name="Fabret C."/>
            <person name="Ferrari E."/>
            <person name="Foulger D."/>
            <person name="Fritz C."/>
            <person name="Fujita M."/>
            <person name="Fujita Y."/>
            <person name="Fuma S."/>
            <person name="Galizzi A."/>
            <person name="Galleron N."/>
            <person name="Ghim S.-Y."/>
            <person name="Glaser P."/>
            <person name="Goffeau A."/>
            <person name="Golightly E.J."/>
            <person name="Grandi G."/>
            <person name="Guiseppi G."/>
            <person name="Guy B.J."/>
            <person name="Haga K."/>
            <person name="Haiech J."/>
            <person name="Harwood C.R."/>
            <person name="Henaut A."/>
            <person name="Hilbert H."/>
            <person name="Holsappel S."/>
            <person name="Hosono S."/>
            <person name="Hullo M.-F."/>
            <person name="Itaya M."/>
            <person name="Jones L.-M."/>
            <person name="Joris B."/>
            <person name="Karamata D."/>
            <person name="Kasahara Y."/>
            <person name="Klaerr-Blanchard M."/>
            <person name="Klein C."/>
            <person name="Kobayashi Y."/>
            <person name="Koetter P."/>
            <person name="Koningstein G."/>
            <person name="Krogh S."/>
            <person name="Kumano M."/>
            <person name="Kurita K."/>
            <person name="Lapidus A."/>
            <person name="Lardinois S."/>
            <person name="Lauber J."/>
            <person name="Lazarevic V."/>
            <person name="Lee S.-M."/>
            <person name="Levine A."/>
            <person name="Liu H."/>
            <person name="Masuda S."/>
            <person name="Mauel C."/>
            <person name="Medigue C."/>
            <person name="Medina N."/>
            <person name="Mellado R.P."/>
            <person name="Mizuno M."/>
            <person name="Moestl D."/>
            <person name="Nakai S."/>
            <person name="Noback M."/>
            <person name="Noone D."/>
            <person name="O'Reilly M."/>
            <person name="Ogawa K."/>
            <person name="Ogiwara A."/>
            <person name="Oudega B."/>
            <person name="Park S.-H."/>
            <person name="Parro V."/>
            <person name="Pohl T.M."/>
            <person name="Portetelle D."/>
            <person name="Porwollik S."/>
            <person name="Prescott A.M."/>
            <person name="Presecan E."/>
            <person name="Pujic P."/>
            <person name="Purnelle B."/>
            <person name="Rapoport G."/>
            <person name="Rey M."/>
            <person name="Reynolds S."/>
            <person name="Rieger M."/>
            <person name="Rivolta C."/>
            <person name="Rocha E."/>
            <person name="Roche B."/>
            <person name="Rose M."/>
            <person name="Sadaie Y."/>
            <person name="Sato T."/>
            <person name="Scanlan E."/>
            <person name="Schleich S."/>
            <person name="Schroeter R."/>
            <person name="Scoffone F."/>
            <person name="Sekiguchi J."/>
            <person name="Sekowska A."/>
            <person name="Seror S.J."/>
            <person name="Serror P."/>
            <person name="Shin B.-S."/>
            <person name="Soldo B."/>
            <person name="Sorokin A."/>
            <person name="Tacconi E."/>
            <person name="Takagi T."/>
            <person name="Takahashi H."/>
            <person name="Takemaru K."/>
            <person name="Takeuchi M."/>
            <person name="Tamakoshi A."/>
            <person name="Tanaka T."/>
            <person name="Terpstra P."/>
            <person name="Tognoni A."/>
            <person name="Tosato V."/>
            <person name="Uchiyama S."/>
            <person name="Vandenbol M."/>
            <person name="Vannier F."/>
            <person name="Vassarotti A."/>
            <person name="Viari A."/>
            <person name="Wambutt R."/>
            <person name="Wedler E."/>
            <person name="Wedler H."/>
            <person name="Weitzenegger T."/>
            <person name="Winters P."/>
            <person name="Wipat A."/>
            <person name="Yamamoto H."/>
            <person name="Yamane K."/>
            <person name="Yasumoto K."/>
            <person name="Yata K."/>
            <person name="Yoshida K."/>
            <person name="Yoshikawa H.-F."/>
            <person name="Zumstein E."/>
            <person name="Yoshikawa H."/>
            <person name="Danchin A."/>
        </authorList>
    </citation>
    <scope>NUCLEOTIDE SEQUENCE [LARGE SCALE GENOMIC DNA]</scope>
    <source>
        <strain>168</strain>
    </source>
</reference>
<reference key="4">
    <citation type="journal article" date="2002" name="J. Bacteriol.">
        <title>Characterization of the depletion of 2-C-methyl-D-erythritol-2,4-cyclodiphosphate synthase in Escherichia coli and Bacillus subtilis.</title>
        <authorList>
            <person name="Campbell T.L."/>
            <person name="Brown E.D."/>
        </authorList>
    </citation>
    <scope>DISRUPTION PHENOTYPE</scope>
</reference>
<reference key="5">
    <citation type="journal article" date="2007" name="Appl. Microbiol. Biotechnol.">
        <title>Functional analysis of genes involved in the biosynthesis of isoprene in Bacillus subtilis.</title>
        <authorList>
            <person name="Julsing M.K."/>
            <person name="Rijpkema M."/>
            <person name="Woerdenbag H.J."/>
            <person name="Quax W.J."/>
            <person name="Kayser O."/>
        </authorList>
    </citation>
    <scope>FUNCTION IN THE ISOPRENE BIOSYNTHESIS</scope>
    <scope>DISRUPTION PHENOTYPE</scope>
</reference>
<accession>Q06756</accession>
<keyword id="KW-0002">3D-structure</keyword>
<keyword id="KW-0414">Isoprene biosynthesis</keyword>
<keyword id="KW-0456">Lyase</keyword>
<keyword id="KW-0479">Metal-binding</keyword>
<keyword id="KW-1185">Reference proteome</keyword>
<comment type="function">
    <text evidence="1 3">Involved in the biosynthesis of isopentenyl diphosphate (IPP) and dimethylallyl diphosphate (DMAPP), two major building blocks of isoprenoid compounds. Catalyzes the conversion of 4-diphosphocytidyl-2-C-methyl-D-erythritol 2-phosphate (CDP-ME2P) to 2-C-methyl-D-erythritol 2,4-cyclodiphosphate (ME-CPP) with a corresponding release of cytidine 5-monophosphate (CMP).</text>
</comment>
<comment type="catalytic activity">
    <reaction evidence="1">
        <text>4-CDP-2-C-methyl-D-erythritol 2-phosphate = 2-C-methyl-D-erythritol 2,4-cyclic diphosphate + CMP</text>
        <dbReference type="Rhea" id="RHEA:23864"/>
        <dbReference type="ChEBI" id="CHEBI:57919"/>
        <dbReference type="ChEBI" id="CHEBI:58483"/>
        <dbReference type="ChEBI" id="CHEBI:60377"/>
        <dbReference type="EC" id="4.6.1.12"/>
    </reaction>
</comment>
<comment type="cofactor">
    <cofactor evidence="1">
        <name>a divalent metal cation</name>
        <dbReference type="ChEBI" id="CHEBI:60240"/>
    </cofactor>
    <text evidence="1">Binds 1 divalent metal cation per subunit.</text>
</comment>
<comment type="pathway">
    <text evidence="1">Isoprenoid biosynthesis; isopentenyl diphosphate biosynthesis via DXP pathway; isopentenyl diphosphate from 1-deoxy-D-xylulose 5-phosphate: step 4/6.</text>
</comment>
<comment type="subunit">
    <text evidence="1">Homotrimer.</text>
</comment>
<comment type="disruption phenotype">
    <text evidence="2 3">Cells lacking this gene reveal a loss of rod shape, irregular septation, multicompartmentalized cells, and thickened cell walls. It also induces a decrease in isoprene production.</text>
</comment>
<comment type="similarity">
    <text evidence="1 4">Belongs to the IspF family.</text>
</comment>